<gene>
    <name type="primary">TBL35</name>
    <name type="ordered locus">At5g01620</name>
    <name type="ORF">F7A7.140</name>
</gene>
<protein>
    <recommendedName>
        <fullName>Protein trichome birefringence-like 35</fullName>
    </recommendedName>
</protein>
<name>TBL35_ARATH</name>
<sequence length="449" mass="52689">MSQRWSRKKSRLPLAGLLFILVVTFMILFNERSIQQIHHHAASHTQNLREPSTFDFVKPNVPRINYLGAHEVLDRFSKCNSTKEYSGKKIGWVDPFEDHPGQVTKEEQKCDVFSGKWVFDNSSSYPLHKESQCPYMSDQLACQKHGRKDLEYQHWRWQPHACNLKRWNAIEMWEKLRGKRLMFVGDSLNRGQWISMVCLLQSVIPRDKQSMSPNAHLTIFRAEDYNATVEFLWAPLLVESNSDDPVNHRLSERIIRPDSVLKHASKWQHADILIFNTYLWWRQDSVKLRWSSEEKGSCEEVKSAEGMEMAMDSWGDWVANNVDPNKKRVFFVTMSPTHQWSREWNPGSEGNCYGEKKPIEEESYWGSGSDIPTMRMVKRVLERLGPKVSVINITQLSEYRKDGHPSVYRKFWEPLNEDRLKNPASYSDCTHWCVPGVPDVWNQLLFHFL</sequence>
<reference key="1">
    <citation type="journal article" date="2000" name="Nature">
        <title>Sequence and analysis of chromosome 5 of the plant Arabidopsis thaliana.</title>
        <authorList>
            <person name="Tabata S."/>
            <person name="Kaneko T."/>
            <person name="Nakamura Y."/>
            <person name="Kotani H."/>
            <person name="Kato T."/>
            <person name="Asamizu E."/>
            <person name="Miyajima N."/>
            <person name="Sasamoto S."/>
            <person name="Kimura T."/>
            <person name="Hosouchi T."/>
            <person name="Kawashima K."/>
            <person name="Kohara M."/>
            <person name="Matsumoto M."/>
            <person name="Matsuno A."/>
            <person name="Muraki A."/>
            <person name="Nakayama S."/>
            <person name="Nakazaki N."/>
            <person name="Naruo K."/>
            <person name="Okumura S."/>
            <person name="Shinpo S."/>
            <person name="Takeuchi C."/>
            <person name="Wada T."/>
            <person name="Watanabe A."/>
            <person name="Yamada M."/>
            <person name="Yasuda M."/>
            <person name="Sato S."/>
            <person name="de la Bastide M."/>
            <person name="Huang E."/>
            <person name="Spiegel L."/>
            <person name="Gnoj L."/>
            <person name="O'Shaughnessy A."/>
            <person name="Preston R."/>
            <person name="Habermann K."/>
            <person name="Murray J."/>
            <person name="Johnson D."/>
            <person name="Rohlfing T."/>
            <person name="Nelson J."/>
            <person name="Stoneking T."/>
            <person name="Pepin K."/>
            <person name="Spieth J."/>
            <person name="Sekhon M."/>
            <person name="Armstrong J."/>
            <person name="Becker M."/>
            <person name="Belter E."/>
            <person name="Cordum H."/>
            <person name="Cordes M."/>
            <person name="Courtney L."/>
            <person name="Courtney W."/>
            <person name="Dante M."/>
            <person name="Du H."/>
            <person name="Edwards J."/>
            <person name="Fryman J."/>
            <person name="Haakensen B."/>
            <person name="Lamar E."/>
            <person name="Latreille P."/>
            <person name="Leonard S."/>
            <person name="Meyer R."/>
            <person name="Mulvaney E."/>
            <person name="Ozersky P."/>
            <person name="Riley A."/>
            <person name="Strowmatt C."/>
            <person name="Wagner-McPherson C."/>
            <person name="Wollam A."/>
            <person name="Yoakum M."/>
            <person name="Bell M."/>
            <person name="Dedhia N."/>
            <person name="Parnell L."/>
            <person name="Shah R."/>
            <person name="Rodriguez M."/>
            <person name="Hoon See L."/>
            <person name="Vil D."/>
            <person name="Baker J."/>
            <person name="Kirchoff K."/>
            <person name="Toth K."/>
            <person name="King L."/>
            <person name="Bahret A."/>
            <person name="Miller B."/>
            <person name="Marra M.A."/>
            <person name="Martienssen R."/>
            <person name="McCombie W.R."/>
            <person name="Wilson R.K."/>
            <person name="Murphy G."/>
            <person name="Bancroft I."/>
            <person name="Volckaert G."/>
            <person name="Wambutt R."/>
            <person name="Duesterhoeft A."/>
            <person name="Stiekema W."/>
            <person name="Pohl T."/>
            <person name="Entian K.-D."/>
            <person name="Terryn N."/>
            <person name="Hartley N."/>
            <person name="Bent E."/>
            <person name="Johnson S."/>
            <person name="Langham S.-A."/>
            <person name="McCullagh B."/>
            <person name="Robben J."/>
            <person name="Grymonprez B."/>
            <person name="Zimmermann W."/>
            <person name="Ramsperger U."/>
            <person name="Wedler H."/>
            <person name="Balke K."/>
            <person name="Wedler E."/>
            <person name="Peters S."/>
            <person name="van Staveren M."/>
            <person name="Dirkse W."/>
            <person name="Mooijman P."/>
            <person name="Klein Lankhorst R."/>
            <person name="Weitzenegger T."/>
            <person name="Bothe G."/>
            <person name="Rose M."/>
            <person name="Hauf J."/>
            <person name="Berneiser S."/>
            <person name="Hempel S."/>
            <person name="Feldpausch M."/>
            <person name="Lamberth S."/>
            <person name="Villarroel R."/>
            <person name="Gielen J."/>
            <person name="Ardiles W."/>
            <person name="Bents O."/>
            <person name="Lemcke K."/>
            <person name="Kolesov G."/>
            <person name="Mayer K.F.X."/>
            <person name="Rudd S."/>
            <person name="Schoof H."/>
            <person name="Schueller C."/>
            <person name="Zaccaria P."/>
            <person name="Mewes H.-W."/>
            <person name="Bevan M."/>
            <person name="Fransz P.F."/>
        </authorList>
    </citation>
    <scope>NUCLEOTIDE SEQUENCE [LARGE SCALE GENOMIC DNA]</scope>
    <source>
        <strain>cv. Columbia</strain>
    </source>
</reference>
<reference key="2">
    <citation type="journal article" date="2017" name="Plant J.">
        <title>Araport11: a complete reannotation of the Arabidopsis thaliana reference genome.</title>
        <authorList>
            <person name="Cheng C.Y."/>
            <person name="Krishnakumar V."/>
            <person name="Chan A.P."/>
            <person name="Thibaud-Nissen F."/>
            <person name="Schobel S."/>
            <person name="Town C.D."/>
        </authorList>
    </citation>
    <scope>GENOME REANNOTATION</scope>
    <source>
        <strain>cv. Columbia</strain>
    </source>
</reference>
<reference key="3">
    <citation type="journal article" date="2003" name="Science">
        <title>Empirical analysis of transcriptional activity in the Arabidopsis genome.</title>
        <authorList>
            <person name="Yamada K."/>
            <person name="Lim J."/>
            <person name="Dale J.M."/>
            <person name="Chen H."/>
            <person name="Shinn P."/>
            <person name="Palm C.J."/>
            <person name="Southwick A.M."/>
            <person name="Wu H.C."/>
            <person name="Kim C.J."/>
            <person name="Nguyen M."/>
            <person name="Pham P.K."/>
            <person name="Cheuk R.F."/>
            <person name="Karlin-Newmann G."/>
            <person name="Liu S.X."/>
            <person name="Lam B."/>
            <person name="Sakano H."/>
            <person name="Wu T."/>
            <person name="Yu G."/>
            <person name="Miranda M."/>
            <person name="Quach H.L."/>
            <person name="Tripp M."/>
            <person name="Chang C.H."/>
            <person name="Lee J.M."/>
            <person name="Toriumi M.J."/>
            <person name="Chan M.M."/>
            <person name="Tang C.C."/>
            <person name="Onodera C.S."/>
            <person name="Deng J.M."/>
            <person name="Akiyama K."/>
            <person name="Ansari Y."/>
            <person name="Arakawa T."/>
            <person name="Banh J."/>
            <person name="Banno F."/>
            <person name="Bowser L."/>
            <person name="Brooks S.Y."/>
            <person name="Carninci P."/>
            <person name="Chao Q."/>
            <person name="Choy N."/>
            <person name="Enju A."/>
            <person name="Goldsmith A.D."/>
            <person name="Gurjal M."/>
            <person name="Hansen N.F."/>
            <person name="Hayashizaki Y."/>
            <person name="Johnson-Hopson C."/>
            <person name="Hsuan V.W."/>
            <person name="Iida K."/>
            <person name="Karnes M."/>
            <person name="Khan S."/>
            <person name="Koesema E."/>
            <person name="Ishida J."/>
            <person name="Jiang P.X."/>
            <person name="Jones T."/>
            <person name="Kawai J."/>
            <person name="Kamiya A."/>
            <person name="Meyers C."/>
            <person name="Nakajima M."/>
            <person name="Narusaka M."/>
            <person name="Seki M."/>
            <person name="Sakurai T."/>
            <person name="Satou M."/>
            <person name="Tamse R."/>
            <person name="Vaysberg M."/>
            <person name="Wallender E.K."/>
            <person name="Wong C."/>
            <person name="Yamamura Y."/>
            <person name="Yuan S."/>
            <person name="Shinozaki K."/>
            <person name="Davis R.W."/>
            <person name="Theologis A."/>
            <person name="Ecker J.R."/>
        </authorList>
    </citation>
    <scope>NUCLEOTIDE SEQUENCE [LARGE SCALE MRNA] (ISOFORM 1)</scope>
    <source>
        <strain>cv. Columbia</strain>
    </source>
</reference>
<reference key="4">
    <citation type="submission" date="2002-03" db="EMBL/GenBank/DDBJ databases">
        <title>Full-length cDNA from Arabidopsis thaliana.</title>
        <authorList>
            <person name="Brover V.V."/>
            <person name="Troukhan M.E."/>
            <person name="Alexandrov N.A."/>
            <person name="Lu Y.-P."/>
            <person name="Flavell R.B."/>
            <person name="Feldmann K.A."/>
        </authorList>
    </citation>
    <scope>NUCLEOTIDE SEQUENCE [LARGE SCALE MRNA]</scope>
</reference>
<reference key="5">
    <citation type="journal article" date="2007" name="Plant J.">
        <title>Arabidopsis ESK1 encodes a novel regulator of freezing tolerance.</title>
        <authorList>
            <person name="Xin Z."/>
            <person name="Mandaokar A."/>
            <person name="Chen J."/>
            <person name="Last R.L."/>
            <person name="Browse J."/>
        </authorList>
    </citation>
    <scope>GENE FAMILY</scope>
    <source>
        <strain>cv. Columbia</strain>
    </source>
</reference>
<reference key="6">
    <citation type="journal article" date="2010" name="Plant Physiol.">
        <title>TRICHOME BIREFRINGENCE and its homolog AT5G01360 encode plant-specific DUF231 proteins required for cellulose biosynthesis in Arabidopsis.</title>
        <authorList>
            <person name="Bischoff V."/>
            <person name="Nita S."/>
            <person name="Neumetzler L."/>
            <person name="Schindelasch D."/>
            <person name="Urbain A."/>
            <person name="Eshed R."/>
            <person name="Persson S."/>
            <person name="Delmer D."/>
            <person name="Scheible W.R."/>
        </authorList>
    </citation>
    <scope>GENE FAMILY</scope>
    <scope>NOMENCLATURE</scope>
</reference>
<reference key="7">
    <citation type="journal article" date="2010" name="Plant Signal. Behav.">
        <title>Involvement of TBL/DUF231 proteins into cell wall biology.</title>
        <authorList>
            <person name="Bischoff V."/>
            <person name="Selbig J."/>
            <person name="Scheible W.R."/>
        </authorList>
    </citation>
    <scope>3D-STRUCTURE MODELING</scope>
</reference>
<dbReference type="EMBL" id="AL161946">
    <property type="protein sequence ID" value="CAB82278.1"/>
    <property type="status" value="ALT_SEQ"/>
    <property type="molecule type" value="Genomic_DNA"/>
</dbReference>
<dbReference type="EMBL" id="CP002688">
    <property type="protein sequence ID" value="AED90366.1"/>
    <property type="molecule type" value="Genomic_DNA"/>
</dbReference>
<dbReference type="EMBL" id="CP002688">
    <property type="protein sequence ID" value="AED90367.1"/>
    <property type="molecule type" value="Genomic_DNA"/>
</dbReference>
<dbReference type="EMBL" id="CP002688">
    <property type="protein sequence ID" value="AED90368.1"/>
    <property type="molecule type" value="Genomic_DNA"/>
</dbReference>
<dbReference type="EMBL" id="AY080736">
    <property type="protein sequence ID" value="AAL86006.1"/>
    <property type="molecule type" value="mRNA"/>
</dbReference>
<dbReference type="EMBL" id="AY117243">
    <property type="protein sequence ID" value="AAM51318.1"/>
    <property type="molecule type" value="mRNA"/>
</dbReference>
<dbReference type="EMBL" id="AY084435">
    <property type="protein sequence ID" value="AAM61008.1"/>
    <property type="molecule type" value="mRNA"/>
</dbReference>
<dbReference type="PIR" id="T48183">
    <property type="entry name" value="T48183"/>
</dbReference>
<dbReference type="RefSeq" id="NP_001190201.1">
    <molecule id="Q8RXQ1-2"/>
    <property type="nucleotide sequence ID" value="NM_001203272.1"/>
</dbReference>
<dbReference type="RefSeq" id="NP_568093.1">
    <molecule id="Q8RXQ1-1"/>
    <property type="nucleotide sequence ID" value="NM_120240.1"/>
</dbReference>
<dbReference type="RefSeq" id="NP_850749.1">
    <molecule id="Q8RXQ1-1"/>
    <property type="nucleotide sequence ID" value="NM_180418.4"/>
</dbReference>
<dbReference type="SMR" id="Q8RXQ1"/>
<dbReference type="FunCoup" id="Q8RXQ1">
    <property type="interactions" value="256"/>
</dbReference>
<dbReference type="STRING" id="3702.Q8RXQ1"/>
<dbReference type="iPTMnet" id="Q8RXQ1"/>
<dbReference type="PaxDb" id="3702-AT5G01620.3"/>
<dbReference type="ProteomicsDB" id="232993">
    <molecule id="Q8RXQ1-1"/>
</dbReference>
<dbReference type="EnsemblPlants" id="AT5G01620.1">
    <molecule id="Q8RXQ1-1"/>
    <property type="protein sequence ID" value="AT5G01620.1"/>
    <property type="gene ID" value="AT5G01620"/>
</dbReference>
<dbReference type="EnsemblPlants" id="AT5G01620.2">
    <molecule id="Q8RXQ1-1"/>
    <property type="protein sequence ID" value="AT5G01620.2"/>
    <property type="gene ID" value="AT5G01620"/>
</dbReference>
<dbReference type="EnsemblPlants" id="AT5G01620.3">
    <molecule id="Q8RXQ1-2"/>
    <property type="protein sequence ID" value="AT5G01620.3"/>
    <property type="gene ID" value="AT5G01620"/>
</dbReference>
<dbReference type="GeneID" id="831716"/>
<dbReference type="Gramene" id="AT5G01620.1">
    <molecule id="Q8RXQ1-1"/>
    <property type="protein sequence ID" value="AT5G01620.1"/>
    <property type="gene ID" value="AT5G01620"/>
</dbReference>
<dbReference type="Gramene" id="AT5G01620.2">
    <molecule id="Q8RXQ1-1"/>
    <property type="protein sequence ID" value="AT5G01620.2"/>
    <property type="gene ID" value="AT5G01620"/>
</dbReference>
<dbReference type="Gramene" id="AT5G01620.3">
    <molecule id="Q8RXQ1-2"/>
    <property type="protein sequence ID" value="AT5G01620.3"/>
    <property type="gene ID" value="AT5G01620"/>
</dbReference>
<dbReference type="KEGG" id="ath:AT5G01620"/>
<dbReference type="Araport" id="AT5G01620"/>
<dbReference type="TAIR" id="AT5G01620">
    <property type="gene designation" value="TBL35"/>
</dbReference>
<dbReference type="eggNOG" id="ENOG502QV6P">
    <property type="taxonomic scope" value="Eukaryota"/>
</dbReference>
<dbReference type="HOGENOM" id="CLU_020953_3_1_1"/>
<dbReference type="InParanoid" id="Q8RXQ1"/>
<dbReference type="OMA" id="TIEFLWA"/>
<dbReference type="PhylomeDB" id="Q8RXQ1"/>
<dbReference type="PRO" id="PR:Q8RXQ1"/>
<dbReference type="Proteomes" id="UP000006548">
    <property type="component" value="Chromosome 5"/>
</dbReference>
<dbReference type="ExpressionAtlas" id="Q8RXQ1">
    <property type="expression patterns" value="baseline and differential"/>
</dbReference>
<dbReference type="GO" id="GO:0005794">
    <property type="term" value="C:Golgi apparatus"/>
    <property type="evidence" value="ECO:0000314"/>
    <property type="project" value="TAIR"/>
</dbReference>
<dbReference type="GO" id="GO:0016020">
    <property type="term" value="C:membrane"/>
    <property type="evidence" value="ECO:0007669"/>
    <property type="project" value="UniProtKB-SubCell"/>
</dbReference>
<dbReference type="GO" id="GO:1990538">
    <property type="term" value="F:xylan O-acetyltransferase activity"/>
    <property type="evidence" value="ECO:0000315"/>
    <property type="project" value="TAIR"/>
</dbReference>
<dbReference type="GO" id="GO:0045492">
    <property type="term" value="P:xylan biosynthetic process"/>
    <property type="evidence" value="ECO:0000315"/>
    <property type="project" value="TAIR"/>
</dbReference>
<dbReference type="InterPro" id="IPR029962">
    <property type="entry name" value="TBL"/>
</dbReference>
<dbReference type="InterPro" id="IPR026057">
    <property type="entry name" value="TBL_C"/>
</dbReference>
<dbReference type="InterPro" id="IPR025846">
    <property type="entry name" value="TBL_N"/>
</dbReference>
<dbReference type="PANTHER" id="PTHR32285:SF202">
    <property type="entry name" value="PROTEIN TRICHOME BIREFRINGENCE-LIKE 35"/>
    <property type="match status" value="1"/>
</dbReference>
<dbReference type="PANTHER" id="PTHR32285">
    <property type="entry name" value="PROTEIN TRICHOME BIREFRINGENCE-LIKE 9-RELATED"/>
    <property type="match status" value="1"/>
</dbReference>
<dbReference type="Pfam" id="PF13839">
    <property type="entry name" value="PC-Esterase"/>
    <property type="match status" value="1"/>
</dbReference>
<dbReference type="Pfam" id="PF14416">
    <property type="entry name" value="PMR5N"/>
    <property type="match status" value="1"/>
</dbReference>
<feature type="chain" id="PRO_0000425400" description="Protein trichome birefringence-like 35">
    <location>
        <begin position="1"/>
        <end position="449"/>
    </location>
</feature>
<feature type="transmembrane region" description="Helical; Signal-anchor for type II membrane protein" evidence="3">
    <location>
        <begin position="12"/>
        <end position="29"/>
    </location>
</feature>
<feature type="short sequence motif" description="GDS motif">
    <location>
        <begin position="185"/>
        <end position="187"/>
    </location>
</feature>
<feature type="short sequence motif" description="DCXHWCLPGXXDXWN motif">
    <location>
        <begin position="428"/>
        <end position="442"/>
    </location>
</feature>
<feature type="splice variant" id="VSP_053694" description="In isoform 2." evidence="4">
    <original>H</original>
    <variation>HGFCFEKNA</variation>
    <location>
        <position position="70"/>
    </location>
</feature>
<feature type="sequence conflict" description="In Ref. 4; AAM61008." evidence="4" ref="4">
    <original>D</original>
    <variation>G</variation>
    <location>
        <position position="74"/>
    </location>
</feature>
<feature type="sequence conflict" description="In Ref. 4; AAM61008." evidence="4" ref="4">
    <original>W</original>
    <variation>C</variation>
    <location>
        <position position="92"/>
    </location>
</feature>
<feature type="sequence conflict" description="In Ref. 4; AAM61008." evidence="4" ref="4">
    <original>A</original>
    <variation>V</variation>
    <location>
        <position position="169"/>
    </location>
</feature>
<feature type="sequence conflict" description="In Ref. 4; AAM61008." evidence="4" ref="4">
    <original>G</original>
    <variation>S</variation>
    <location>
        <position position="191"/>
    </location>
</feature>
<feature type="sequence conflict" description="In Ref. 4; AAM61008." evidence="4" ref="4">
    <original>Q</original>
    <variation>R</variation>
    <location>
        <position position="201"/>
    </location>
</feature>
<keyword id="KW-0025">Alternative splicing</keyword>
<keyword id="KW-0472">Membrane</keyword>
<keyword id="KW-1185">Reference proteome</keyword>
<keyword id="KW-0735">Signal-anchor</keyword>
<keyword id="KW-0812">Transmembrane</keyword>
<keyword id="KW-1133">Transmembrane helix</keyword>
<proteinExistence type="evidence at transcript level"/>
<organism>
    <name type="scientific">Arabidopsis thaliana</name>
    <name type="common">Mouse-ear cress</name>
    <dbReference type="NCBI Taxonomy" id="3702"/>
    <lineage>
        <taxon>Eukaryota</taxon>
        <taxon>Viridiplantae</taxon>
        <taxon>Streptophyta</taxon>
        <taxon>Embryophyta</taxon>
        <taxon>Tracheophyta</taxon>
        <taxon>Spermatophyta</taxon>
        <taxon>Magnoliopsida</taxon>
        <taxon>eudicotyledons</taxon>
        <taxon>Gunneridae</taxon>
        <taxon>Pentapetalae</taxon>
        <taxon>rosids</taxon>
        <taxon>malvids</taxon>
        <taxon>Brassicales</taxon>
        <taxon>Brassicaceae</taxon>
        <taxon>Camelineae</taxon>
        <taxon>Arabidopsis</taxon>
    </lineage>
</organism>
<comment type="function">
    <text evidence="1 2">May act as a bridging protein that binds pectin and other cell wall polysaccharides. Probably involved in maintaining esterification of pectins (By similarity). May be involved in the specific O-acetylation of cell wall polymers (By similarity).</text>
</comment>
<comment type="subcellular location">
    <subcellularLocation>
        <location evidence="4">Membrane</location>
        <topology evidence="4">Single-pass type II membrane protein</topology>
    </subcellularLocation>
</comment>
<comment type="alternative products">
    <event type="alternative splicing"/>
    <isoform>
        <id>Q8RXQ1-1</id>
        <name>1</name>
        <sequence type="displayed"/>
    </isoform>
    <isoform>
        <id>Q8RXQ1-2</id>
        <name>2</name>
        <sequence type="described" ref="VSP_053694"/>
    </isoform>
</comment>
<comment type="miscellaneous">
    <text evidence="5">Contains 2 motifs that are conserved in esterases, but it is unlikely that this protein belongs to the catalytically active pectin esterases.</text>
</comment>
<comment type="similarity">
    <text evidence="4">Belongs to the PC-esterase family. TBL subfamily.</text>
</comment>
<comment type="sequence caution" evidence="4">
    <conflict type="erroneous gene model prediction">
        <sequence resource="EMBL-CDS" id="CAB82278"/>
    </conflict>
</comment>
<evidence type="ECO:0000250" key="1">
    <source>
        <dbReference type="UniProtKB" id="Q9FG35"/>
    </source>
</evidence>
<evidence type="ECO:0000250" key="2">
    <source>
        <dbReference type="UniProtKB" id="Q9LY46"/>
    </source>
</evidence>
<evidence type="ECO:0000255" key="3"/>
<evidence type="ECO:0000305" key="4"/>
<evidence type="ECO:0000305" key="5">
    <source>
    </source>
</evidence>
<accession>Q8RXQ1</accession>
<accession>F4K9F9</accession>
<accession>Q8LG69</accession>
<accession>Q9M014</accession>